<organism>
    <name type="scientific">Escherichia phage Mu</name>
    <name type="common">Bacteriophage Mu</name>
    <dbReference type="NCBI Taxonomy" id="2681603"/>
    <lineage>
        <taxon>Viruses</taxon>
        <taxon>Duplodnaviria</taxon>
        <taxon>Heunggongvirae</taxon>
        <taxon>Uroviricota</taxon>
        <taxon>Caudoviricetes</taxon>
        <taxon>Muvirus</taxon>
        <taxon>Muvirus mu</taxon>
    </lineage>
</organism>
<name>S1_BPMU</name>
<proteinExistence type="evidence at protein level"/>
<reference key="1">
    <citation type="journal article" date="2002" name="J. Mol. Biol.">
        <title>Bacteriophage Mu genome sequence: analysis and comparison with Mu-like prophages in Haemophilus, Neisseria and Deinococcus.</title>
        <authorList>
            <person name="Morgan G.J."/>
            <person name="Hatfull G.F."/>
            <person name="Casjens S."/>
            <person name="Hendrix R.W."/>
        </authorList>
    </citation>
    <scope>NUCLEOTIDE SEQUENCE [LARGE SCALE GENOMIC DNA]</scope>
</reference>
<reference key="2">
    <citation type="journal article" date="1980" name="Nature">
        <title>Invertible DNA determines host specificity of bacteriophage mu.</title>
        <authorList>
            <person name="van de Putte P."/>
            <person name="Cramer S."/>
            <person name="Giphart-Gassler M."/>
        </authorList>
    </citation>
    <scope>FUNCTION</scope>
</reference>
<reference key="3">
    <citation type="journal article" date="1985" name="Virology">
        <title>Morphogenetic structures present in lysates of amber mutants of bacteriophage Mu.</title>
        <authorList>
            <person name="Grundy F.J."/>
            <person name="Howe M.M."/>
        </authorList>
    </citation>
    <scope>DISRUPTION PHENOTYPE</scope>
</reference>
<reference key="4">
    <citation type="journal article" date="1993" name="Genetics">
        <title>Mutational analysis of a C-dependent late promoter of bacteriophage Mu.</title>
        <authorList>
            <person name="Chiang L.W."/>
            <person name="Howe M.M."/>
        </authorList>
    </citation>
    <scope>INDUCTION</scope>
</reference>
<reference key="5">
    <citation type="journal article" date="1996" name="Virology">
        <title>Bacteriophage Mu head assembly.</title>
        <authorList>
            <person name="Grimaud R."/>
        </authorList>
    </citation>
    <scope>SUBCELLULAR LOCATION</scope>
</reference>
<keyword id="KW-0002">3D-structure</keyword>
<keyword id="KW-1035">Host cytoplasm</keyword>
<keyword id="KW-0945">Host-virus interaction</keyword>
<keyword id="KW-0426">Late protein</keyword>
<keyword id="KW-1185">Reference proteome</keyword>
<keyword id="KW-1233">Viral attachment to host adhesion receptor</keyword>
<keyword id="KW-1161">Viral attachment to host cell</keyword>
<keyword id="KW-1264">Viral receptor tropism switching</keyword>
<keyword id="KW-1230">Viral tail fiber protein</keyword>
<keyword id="KW-1227">Viral tail protein</keyword>
<keyword id="KW-0946">Virion</keyword>
<keyword id="KW-1160">Virus entry into host cell</keyword>
<sequence length="504" mass="55361">MFYIDNDSGVTVMPPVSAQRSAIVRWFSEGDGNNVITWPGMDWFNIVQAELLNTLEEAGIQPDKTKLNQLALSIKAIMSNNALLIKNNLSEIKTAGASAQRTARENLDIYDASLNKKGLVQLTSATDSPSETLAATAKAVKIAMDNANARLAKDRNGADIPNKPLFIQNLGLQETVNRARNAVQKNGDTLSGGLTFENDSILAWIRNTDWAKIGFKNDADSDTDSYMWFETGDNGNEYFKWRSKQSTTTKDLMNLKWDALSVLVNAIVNGEVISKSANGLRIAYGNYGFFIRNDGSNTYFMLTNSGDNMGTYNGLRPLWINNATGAVSMGRGLNVSGDTLSDRFAINSSNGMWIQMRDNNAIFGKNIVNTDSAQALLRQNHADRKFMIGGLGNKQFGIYMINNSRTANGTDGQAYMDNNGNWLCGAQVIPGNYANFDSRYVRDVRLGTQSLTGGLSRDYKAPSGHVITGFHTNGDWEMQGGDDKVYIRPVQKNINGTWYNVASA</sequence>
<comment type="function">
    <text evidence="2">Component of the tail fiber that acts as a receptor binding protein. Binds to the primary receptor, thereby determining the host range. Two alternate tail fiber S and S' proteins are encoded extending the host range of the virus.</text>
</comment>
<comment type="subcellular location">
    <subcellularLocation>
        <location evidence="4">Virion</location>
    </subcellularLocation>
    <subcellularLocation>
        <location evidence="6">Host cytoplasm</location>
    </subcellularLocation>
    <text>Tail fiber.</text>
</comment>
<comment type="induction">
    <text evidence="3">Expressed in the late phase of the viral replicative cycle. Expression of late genes is activated by the viral late transcription activator C. Expressed alternatively with tail fiber protein S' (associated with tail fiber assembly protein U'). The switch from S-U to S'-U' occurs through inversion of a DNA segment called G by the phage invertase protein Gin.</text>
</comment>
<comment type="disruption phenotype">
    <text evidence="1">Viral particles lack tail fibers in inversion-defective gin mutants (blocked in G+ orientation; no switch to S'-U').</text>
</comment>
<comment type="miscellaneous">
    <text>The orientation of the G segment is defined as G+ and G-. G+ orientation provides S-U fibers whereas G- provides S'-U' fibers. S-U and S'-U' dont have the same host range (e.g. respectively E.coli and C.freundii).</text>
</comment>
<comment type="similarity">
    <text evidence="5">Belongs to the caudovirales tail fiber protein family.</text>
</comment>
<gene>
    <name type="primary">S</name>
    <name type="ordered locus">Mup49</name>
</gene>
<dbReference type="EMBL" id="AF083977">
    <property type="protein sequence ID" value="AAF01127.1"/>
    <property type="molecule type" value="Genomic_DNA"/>
</dbReference>
<dbReference type="RefSeq" id="NP_050653.1">
    <property type="nucleotide sequence ID" value="NC_000929.1"/>
</dbReference>
<dbReference type="PDB" id="5YVQ">
    <property type="method" value="X-ray"/>
    <property type="resolution" value="2.10 A"/>
    <property type="chains" value="A=1-504"/>
</dbReference>
<dbReference type="PDB" id="8JU3">
    <property type="method" value="X-ray"/>
    <property type="resolution" value="2.00 A"/>
    <property type="chains" value="A=1-177"/>
</dbReference>
<dbReference type="PDB" id="9KI1">
    <property type="method" value="EM"/>
    <property type="resolution" value="3.30 A"/>
    <property type="chains" value="j/k/l/m/n/o/p/q/r=1-504"/>
</dbReference>
<dbReference type="PDBsum" id="5YVQ"/>
<dbReference type="PDBsum" id="8JU3"/>
<dbReference type="PDBsum" id="9KI1"/>
<dbReference type="EMDB" id="EMD-62362"/>
<dbReference type="SMR" id="Q9T1V0"/>
<dbReference type="GeneID" id="2636293"/>
<dbReference type="KEGG" id="vg:2636293"/>
<dbReference type="Proteomes" id="UP000002611">
    <property type="component" value="Genome"/>
</dbReference>
<dbReference type="GO" id="GO:0030430">
    <property type="term" value="C:host cell cytoplasm"/>
    <property type="evidence" value="ECO:0007669"/>
    <property type="project" value="UniProtKB-SubCell"/>
</dbReference>
<dbReference type="GO" id="GO:0098024">
    <property type="term" value="C:virus tail, fiber"/>
    <property type="evidence" value="ECO:0007669"/>
    <property type="project" value="UniProtKB-KW"/>
</dbReference>
<dbReference type="GO" id="GO:0098671">
    <property type="term" value="P:adhesion receptor-mediated virion attachment to host cell"/>
    <property type="evidence" value="ECO:0007669"/>
    <property type="project" value="UniProtKB-KW"/>
</dbReference>
<dbReference type="GO" id="GO:0046718">
    <property type="term" value="P:symbiont entry into host cell"/>
    <property type="evidence" value="ECO:0007669"/>
    <property type="project" value="UniProtKB-KW"/>
</dbReference>
<dbReference type="GO" id="GO:0098678">
    <property type="term" value="P:viral tropism switching"/>
    <property type="evidence" value="ECO:0007669"/>
    <property type="project" value="UniProtKB-KW"/>
</dbReference>
<dbReference type="InterPro" id="IPR048390">
    <property type="entry name" value="Gp34_trimer"/>
</dbReference>
<dbReference type="InterPro" id="IPR005068">
    <property type="entry name" value="Phage_lambda_Stf-r2"/>
</dbReference>
<dbReference type="InterPro" id="IPR051934">
    <property type="entry name" value="Phage_Tail_Fiber_Structural"/>
</dbReference>
<dbReference type="PANTHER" id="PTHR35191">
    <property type="entry name" value="PROPHAGE SIDE TAIL FIBER PROTEIN HOMOLOG STFQ-RELATED"/>
    <property type="match status" value="1"/>
</dbReference>
<dbReference type="PANTHER" id="PTHR35191:SF1">
    <property type="entry name" value="PROPHAGE SIDE TAIL FIBER PROTEIN HOMOLOG STFQ-RELATED"/>
    <property type="match status" value="1"/>
</dbReference>
<dbReference type="Pfam" id="PF21446">
    <property type="entry name" value="Gp34_trimer"/>
    <property type="match status" value="1"/>
</dbReference>
<dbReference type="Pfam" id="PF03406">
    <property type="entry name" value="Phage_fiber_2"/>
    <property type="match status" value="1"/>
</dbReference>
<evidence type="ECO:0000269" key="1">
    <source>
    </source>
</evidence>
<evidence type="ECO:0000269" key="2">
    <source>
    </source>
</evidence>
<evidence type="ECO:0000269" key="3">
    <source>
    </source>
</evidence>
<evidence type="ECO:0000269" key="4">
    <source>
    </source>
</evidence>
<evidence type="ECO:0000305" key="5"/>
<evidence type="ECO:0000305" key="6">
    <source>
    </source>
</evidence>
<evidence type="ECO:0007829" key="7">
    <source>
        <dbReference type="PDB" id="5YVQ"/>
    </source>
</evidence>
<organismHost>
    <name type="scientific">Enterobacteriaceae</name>
    <dbReference type="NCBI Taxonomy" id="543"/>
</organismHost>
<feature type="chain" id="PRO_0000077693" description="Tail fiber protein S">
    <location>
        <begin position="1"/>
        <end position="504"/>
    </location>
</feature>
<feature type="helix" evidence="7">
    <location>
        <begin position="139"/>
        <end position="148"/>
    </location>
</feature>
<feature type="helix" evidence="7">
    <location>
        <begin position="153"/>
        <end position="155"/>
    </location>
</feature>
<feature type="turn" evidence="7">
    <location>
        <begin position="156"/>
        <end position="159"/>
    </location>
</feature>
<feature type="helix" evidence="7">
    <location>
        <begin position="163"/>
        <end position="170"/>
    </location>
</feature>
<feature type="helix" evidence="7">
    <location>
        <begin position="173"/>
        <end position="180"/>
    </location>
</feature>
<feature type="strand" evidence="7">
    <location>
        <begin position="202"/>
        <end position="206"/>
    </location>
</feature>
<feature type="strand" evidence="7">
    <location>
        <begin position="209"/>
        <end position="216"/>
    </location>
</feature>
<feature type="strand" evidence="7">
    <location>
        <begin position="226"/>
        <end position="235"/>
    </location>
</feature>
<feature type="strand" evidence="7">
    <location>
        <begin position="239"/>
        <end position="245"/>
    </location>
</feature>
<feature type="strand" evidence="7">
    <location>
        <begin position="248"/>
        <end position="256"/>
    </location>
</feature>
<feature type="strand" evidence="7">
    <location>
        <begin position="259"/>
        <end position="264"/>
    </location>
</feature>
<feature type="strand" evidence="7">
    <location>
        <begin position="276"/>
        <end position="278"/>
    </location>
</feature>
<feature type="strand" evidence="7">
    <location>
        <begin position="280"/>
        <end position="282"/>
    </location>
</feature>
<feature type="strand" evidence="7">
    <location>
        <begin position="285"/>
        <end position="287"/>
    </location>
</feature>
<feature type="strand" evidence="7">
    <location>
        <begin position="289"/>
        <end position="293"/>
    </location>
</feature>
<feature type="strand" evidence="7">
    <location>
        <begin position="295"/>
        <end position="302"/>
    </location>
</feature>
<feature type="strand" evidence="7">
    <location>
        <begin position="317"/>
        <end position="321"/>
    </location>
</feature>
<feature type="turn" evidence="7">
    <location>
        <begin position="322"/>
        <end position="324"/>
    </location>
</feature>
<feature type="helix" evidence="7">
    <location>
        <begin position="353"/>
        <end position="357"/>
    </location>
</feature>
<feature type="strand" evidence="7">
    <location>
        <begin position="373"/>
        <end position="380"/>
    </location>
</feature>
<feature type="strand" evidence="7">
    <location>
        <begin position="382"/>
        <end position="392"/>
    </location>
</feature>
<feature type="strand" evidence="7">
    <location>
        <begin position="395"/>
        <end position="402"/>
    </location>
</feature>
<feature type="strand" evidence="7">
    <location>
        <begin position="407"/>
        <end position="409"/>
    </location>
</feature>
<feature type="strand" evidence="7">
    <location>
        <begin position="411"/>
        <end position="417"/>
    </location>
</feature>
<feature type="strand" evidence="7">
    <location>
        <begin position="422"/>
        <end position="426"/>
    </location>
</feature>
<feature type="helix" evidence="7">
    <location>
        <begin position="434"/>
        <end position="437"/>
    </location>
</feature>
<feature type="strand" evidence="7">
    <location>
        <begin position="440"/>
        <end position="446"/>
    </location>
</feature>
<feature type="strand" evidence="7">
    <location>
        <begin position="465"/>
        <end position="471"/>
    </location>
</feature>
<feature type="strand" evidence="7">
    <location>
        <begin position="484"/>
        <end position="494"/>
    </location>
</feature>
<feature type="strand" evidence="7">
    <location>
        <begin position="497"/>
        <end position="500"/>
    </location>
</feature>
<accession>Q9T1V0</accession>
<protein>
    <recommendedName>
        <fullName>Tail fiber protein S</fullName>
    </recommendedName>
    <alternativeName>
        <fullName>Gene product 49</fullName>
        <shortName>gp49</shortName>
    </alternativeName>
    <alternativeName>
        <fullName>Gene product S</fullName>
        <shortName>gpS</shortName>
    </alternativeName>
</protein>